<organism>
    <name type="scientific">Mycobacterium tuberculosis (strain CDC 1551 / Oshkosh)</name>
    <dbReference type="NCBI Taxonomy" id="83331"/>
    <lineage>
        <taxon>Bacteria</taxon>
        <taxon>Bacillati</taxon>
        <taxon>Actinomycetota</taxon>
        <taxon>Actinomycetes</taxon>
        <taxon>Mycobacteriales</taxon>
        <taxon>Mycobacteriaceae</taxon>
        <taxon>Mycobacterium</taxon>
        <taxon>Mycobacterium tuberculosis complex</taxon>
    </lineage>
</organism>
<name>MTR_MYCTO</name>
<reference key="1">
    <citation type="submission" date="1997-05" db="EMBL/GenBank/DDBJ databases">
        <title>Mycobacterium tuberculosis gorA homolog, complete coding sequence.</title>
        <authorList>
            <person name="Song J."/>
            <person name="Deretic V."/>
        </authorList>
    </citation>
    <scope>NUCLEOTIDE SEQUENCE [GENOMIC DNA]</scope>
    <source>
        <strain>CDC 1551 / Oshkosh</strain>
    </source>
</reference>
<reference key="2">
    <citation type="journal article" date="2002" name="J. Bacteriol.">
        <title>Whole-genome comparison of Mycobacterium tuberculosis clinical and laboratory strains.</title>
        <authorList>
            <person name="Fleischmann R.D."/>
            <person name="Alland D."/>
            <person name="Eisen J.A."/>
            <person name="Carpenter L."/>
            <person name="White O."/>
            <person name="Peterson J.D."/>
            <person name="DeBoy R.T."/>
            <person name="Dodson R.J."/>
            <person name="Gwinn M.L."/>
            <person name="Haft D.H."/>
            <person name="Hickey E.K."/>
            <person name="Kolonay J.F."/>
            <person name="Nelson W.C."/>
            <person name="Umayam L.A."/>
            <person name="Ermolaeva M.D."/>
            <person name="Salzberg S.L."/>
            <person name="Delcher A."/>
            <person name="Utterback T.R."/>
            <person name="Weidman J.F."/>
            <person name="Khouri H.M."/>
            <person name="Gill J."/>
            <person name="Mikula A."/>
            <person name="Bishai W."/>
            <person name="Jacobs W.R. Jr."/>
            <person name="Venter J.C."/>
            <person name="Fraser C.M."/>
        </authorList>
    </citation>
    <scope>NUCLEOTIDE SEQUENCE [LARGE SCALE GENOMIC DNA]</scope>
    <source>
        <strain>CDC 1551 / Oshkosh</strain>
    </source>
</reference>
<proteinExistence type="inferred from homology"/>
<gene>
    <name type="primary">mtr</name>
    <name type="synonym">gorA</name>
    <name type="ordered locus">MT2922</name>
</gene>
<comment type="function">
    <text evidence="1">Catalyzes the NAD(P)H-dependent reduction of mycothione (the oxidized disulfide form of mycothiol) to mycothiol.</text>
</comment>
<comment type="catalytic activity">
    <reaction>
        <text>2 mycothiol + NADP(+) = mycothione + NADPH + H(+)</text>
        <dbReference type="Rhea" id="RHEA:12685"/>
        <dbReference type="ChEBI" id="CHEBI:15378"/>
        <dbReference type="ChEBI" id="CHEBI:16086"/>
        <dbReference type="ChEBI" id="CHEBI:16768"/>
        <dbReference type="ChEBI" id="CHEBI:57783"/>
        <dbReference type="ChEBI" id="CHEBI:58349"/>
        <dbReference type="EC" id="1.8.1.15"/>
    </reaction>
</comment>
<comment type="catalytic activity">
    <reaction>
        <text>2 mycothiol + NAD(+) = mycothione + NADH + H(+)</text>
        <dbReference type="Rhea" id="RHEA:12689"/>
        <dbReference type="ChEBI" id="CHEBI:15378"/>
        <dbReference type="ChEBI" id="CHEBI:16086"/>
        <dbReference type="ChEBI" id="CHEBI:16768"/>
        <dbReference type="ChEBI" id="CHEBI:57540"/>
        <dbReference type="ChEBI" id="CHEBI:57945"/>
        <dbReference type="EC" id="1.8.1.15"/>
    </reaction>
</comment>
<comment type="cofactor">
    <cofactor evidence="1">
        <name>FAD</name>
        <dbReference type="ChEBI" id="CHEBI:57692"/>
    </cofactor>
    <text evidence="1">Binds 1 FAD per subunit.</text>
</comment>
<comment type="subunit">
    <text evidence="1">Homodimer.</text>
</comment>
<comment type="similarity">
    <text evidence="2">Belongs to the class-I pyridine nucleotide-disulfide oxidoreductase family.</text>
</comment>
<accession>P9WHH2</accession>
<accession>L0TB27</accession>
<accession>O07927</accession>
<accession>Q6MX25</accession>
<accession>Q7D6G4</accession>
<keyword id="KW-1015">Disulfide bond</keyword>
<keyword id="KW-0274">FAD</keyword>
<keyword id="KW-0285">Flavoprotein</keyword>
<keyword id="KW-0520">NAD</keyword>
<keyword id="KW-0521">NADP</keyword>
<keyword id="KW-0560">Oxidoreductase</keyword>
<keyword id="KW-0676">Redox-active center</keyword>
<keyword id="KW-1185">Reference proteome</keyword>
<sequence>METYDIAIIGTGSGNSILDERYASKRAAICEQGTFGGTCLNVGCIPTKMFVYAAEVAKTIRGASRYGIDAHIDRVRWDDVVSRVFGRIDPIALSGEDYRRCAPNIDVYRTHTRFGPVQADGRYLLRTDAGEEFTAEQVVIAAGSRPVIPPAILASGVDYHTSDTVMRIAELPEHIVIVGSGFIAAEFAHVFSALGVRVTLVIRGSCLLRHCDDTICERFTRIASTKWELRTHRNVVDGQQRGSGVALRLDDGCTINADLLLVATGRVSNADLLDAEQAGVDVEDGRVIVDEYQRTSARGVFALGDVSSPYLLKHVANHEARVVQHNLLCDWEDTQSMIVTDHRYVPAAVFTDPQIAAVGLTENQAVAKGLDISVKIQDYGDVAYGWAMEDTSGIVKLITERGSGRLLGAHIMGYQASSLIQPLIQAMSFGLTAAEMARGQYWIHPALPEVVENALLGLR</sequence>
<evidence type="ECO:0000250" key="1"/>
<evidence type="ECO:0000305" key="2"/>
<dbReference type="EC" id="1.8.1.15"/>
<dbReference type="EMBL" id="AE000516">
    <property type="protein sequence ID" value="AAK47247.1"/>
    <property type="molecule type" value="Genomic_DNA"/>
</dbReference>
<dbReference type="PIR" id="B70590">
    <property type="entry name" value="B70590"/>
</dbReference>
<dbReference type="RefSeq" id="WP_003414557.1">
    <property type="nucleotide sequence ID" value="NZ_KK341227.1"/>
</dbReference>
<dbReference type="SMR" id="P9WHH2"/>
<dbReference type="KEGG" id="mtc:MT2922"/>
<dbReference type="PATRIC" id="fig|83331.31.peg.3155"/>
<dbReference type="HOGENOM" id="CLU_016755_1_2_11"/>
<dbReference type="Proteomes" id="UP000001020">
    <property type="component" value="Chromosome"/>
</dbReference>
<dbReference type="GO" id="GO:0004148">
    <property type="term" value="F:dihydrolipoyl dehydrogenase (NADH) activity"/>
    <property type="evidence" value="ECO:0007669"/>
    <property type="project" value="TreeGrafter"/>
</dbReference>
<dbReference type="GO" id="GO:0050660">
    <property type="term" value="F:flavin adenine dinucleotide binding"/>
    <property type="evidence" value="ECO:0007669"/>
    <property type="project" value="TreeGrafter"/>
</dbReference>
<dbReference type="GO" id="GO:0050627">
    <property type="term" value="F:mycothione reductase [NAD(P)H] activity"/>
    <property type="evidence" value="ECO:0007669"/>
    <property type="project" value="UniProtKB-EC"/>
</dbReference>
<dbReference type="GO" id="GO:0006103">
    <property type="term" value="P:2-oxoglutarate metabolic process"/>
    <property type="evidence" value="ECO:0007669"/>
    <property type="project" value="TreeGrafter"/>
</dbReference>
<dbReference type="FunFam" id="3.30.390.30:FF:000017">
    <property type="entry name" value="Mycothione reductase"/>
    <property type="match status" value="1"/>
</dbReference>
<dbReference type="FunFam" id="3.50.50.60:FF:000352">
    <property type="entry name" value="Mycothione reductase"/>
    <property type="match status" value="1"/>
</dbReference>
<dbReference type="Gene3D" id="3.30.390.30">
    <property type="match status" value="1"/>
</dbReference>
<dbReference type="Gene3D" id="3.50.50.60">
    <property type="entry name" value="FAD/NAD(P)-binding domain"/>
    <property type="match status" value="2"/>
</dbReference>
<dbReference type="InterPro" id="IPR050151">
    <property type="entry name" value="Class-I_Pyr_Nuc-Dis_Oxidored"/>
</dbReference>
<dbReference type="InterPro" id="IPR036188">
    <property type="entry name" value="FAD/NAD-bd_sf"/>
</dbReference>
<dbReference type="InterPro" id="IPR023753">
    <property type="entry name" value="FAD/NAD-binding_dom"/>
</dbReference>
<dbReference type="InterPro" id="IPR016156">
    <property type="entry name" value="FAD/NAD-linked_Rdtase_dimer_sf"/>
</dbReference>
<dbReference type="InterPro" id="IPR017817">
    <property type="entry name" value="Mycothione_reductase"/>
</dbReference>
<dbReference type="InterPro" id="IPR001100">
    <property type="entry name" value="Pyr_nuc-diS_OxRdtase"/>
</dbReference>
<dbReference type="InterPro" id="IPR004099">
    <property type="entry name" value="Pyr_nucl-diS_OxRdtase_dimer"/>
</dbReference>
<dbReference type="InterPro" id="IPR012999">
    <property type="entry name" value="Pyr_OxRdtase_I_AS"/>
</dbReference>
<dbReference type="NCBIfam" id="TIGR03452">
    <property type="entry name" value="mycothione_red"/>
    <property type="match status" value="1"/>
</dbReference>
<dbReference type="NCBIfam" id="NF005884">
    <property type="entry name" value="PRK07846.1"/>
    <property type="match status" value="1"/>
</dbReference>
<dbReference type="PANTHER" id="PTHR22912:SF217">
    <property type="entry name" value="DIHYDROLIPOYL DEHYDROGENASE"/>
    <property type="match status" value="1"/>
</dbReference>
<dbReference type="PANTHER" id="PTHR22912">
    <property type="entry name" value="DISULFIDE OXIDOREDUCTASE"/>
    <property type="match status" value="1"/>
</dbReference>
<dbReference type="Pfam" id="PF07992">
    <property type="entry name" value="Pyr_redox_2"/>
    <property type="match status" value="1"/>
</dbReference>
<dbReference type="Pfam" id="PF02852">
    <property type="entry name" value="Pyr_redox_dim"/>
    <property type="match status" value="1"/>
</dbReference>
<dbReference type="PIRSF" id="PIRSF000350">
    <property type="entry name" value="Mercury_reductase_MerA"/>
    <property type="match status" value="1"/>
</dbReference>
<dbReference type="PRINTS" id="PR00368">
    <property type="entry name" value="FADPNR"/>
</dbReference>
<dbReference type="PRINTS" id="PR00411">
    <property type="entry name" value="PNDRDTASEI"/>
</dbReference>
<dbReference type="SUPFAM" id="SSF51905">
    <property type="entry name" value="FAD/NAD(P)-binding domain"/>
    <property type="match status" value="1"/>
</dbReference>
<dbReference type="SUPFAM" id="SSF55424">
    <property type="entry name" value="FAD/NAD-linked reductases, dimerisation (C-terminal) domain"/>
    <property type="match status" value="1"/>
</dbReference>
<dbReference type="PROSITE" id="PS00076">
    <property type="entry name" value="PYRIDINE_REDOX_1"/>
    <property type="match status" value="1"/>
</dbReference>
<protein>
    <recommendedName>
        <fullName>Mycothione reductase</fullName>
        <ecNumber>1.8.1.15</ecNumber>
    </recommendedName>
    <alternativeName>
        <fullName>Mycothiol-disulfide reductase</fullName>
    </alternativeName>
    <alternativeName>
        <fullName>NADPH-dependent mycothione reductase</fullName>
    </alternativeName>
</protein>
<feature type="chain" id="PRO_0000428187" description="Mycothione reductase">
    <location>
        <begin position="1"/>
        <end position="459"/>
    </location>
</feature>
<feature type="active site" description="Proton acceptor" evidence="1">
    <location>
        <position position="444"/>
    </location>
</feature>
<feature type="binding site" evidence="1">
    <location>
        <begin position="31"/>
        <end position="39"/>
    </location>
    <ligand>
        <name>FAD</name>
        <dbReference type="ChEBI" id="CHEBI:57692"/>
    </ligand>
</feature>
<feature type="disulfide bond" description="Redox-active" evidence="1">
    <location>
        <begin position="39"/>
        <end position="44"/>
    </location>
</feature>